<dbReference type="EMBL" id="J03823">
    <property type="protein sequence ID" value="AAA41573.1"/>
    <property type="molecule type" value="Genomic_DNA"/>
</dbReference>
<dbReference type="EMBL" id="BC078884">
    <property type="protein sequence ID" value="AAH78884.1"/>
    <property type="molecule type" value="mRNA"/>
</dbReference>
<dbReference type="PIR" id="A31816">
    <property type="entry name" value="TVRTAS"/>
</dbReference>
<dbReference type="RefSeq" id="NP_036889.1">
    <property type="nucleotide sequence ID" value="NM_012757.2"/>
</dbReference>
<dbReference type="RefSeq" id="XP_006227922.1">
    <property type="nucleotide sequence ID" value="XM_006227860.5"/>
</dbReference>
<dbReference type="RefSeq" id="XP_017444296.1">
    <property type="nucleotide sequence ID" value="XM_017588807.1"/>
</dbReference>
<dbReference type="RefSeq" id="XP_017444297.1">
    <property type="nucleotide sequence ID" value="XM_017588808.1"/>
</dbReference>
<dbReference type="RefSeq" id="XP_038957336.1">
    <property type="nucleotide sequence ID" value="XM_039101408.2"/>
</dbReference>
<dbReference type="RefSeq" id="XP_038957337.1">
    <property type="nucleotide sequence ID" value="XM_039101409.2"/>
</dbReference>
<dbReference type="RefSeq" id="XP_038957344.1">
    <property type="nucleotide sequence ID" value="XM_039101416.2"/>
</dbReference>
<dbReference type="RefSeq" id="XP_063137377.1">
    <property type="nucleotide sequence ID" value="XM_063281307.1"/>
</dbReference>
<dbReference type="RefSeq" id="XP_063137382.1">
    <property type="nucleotide sequence ID" value="XM_063281312.1"/>
</dbReference>
<dbReference type="RefSeq" id="XP_063137388.1">
    <property type="nucleotide sequence ID" value="XM_063281318.1"/>
</dbReference>
<dbReference type="RefSeq" id="XP_063137389.1">
    <property type="nucleotide sequence ID" value="XM_063281319.1"/>
</dbReference>
<dbReference type="RefSeq" id="XP_063137399.1">
    <property type="nucleotide sequence ID" value="XM_063281329.1"/>
</dbReference>
<dbReference type="SMR" id="P12526"/>
<dbReference type="FunCoup" id="P12526">
    <property type="interactions" value="58"/>
</dbReference>
<dbReference type="STRING" id="10116.ENSRNOP00000020100"/>
<dbReference type="GuidetoPHARMACOLOGY" id="150"/>
<dbReference type="GlyCosmos" id="P12526">
    <property type="glycosylation" value="3 sites, No reported glycans"/>
</dbReference>
<dbReference type="GlyGen" id="P12526">
    <property type="glycosylation" value="3 sites"/>
</dbReference>
<dbReference type="PhosphoSitePlus" id="P12526"/>
<dbReference type="PaxDb" id="10116-ENSRNOP00000020100"/>
<dbReference type="Ensembl" id="ENSRNOT00000020100.6">
    <property type="protein sequence ID" value="ENSRNOP00000020100.4"/>
    <property type="gene ID" value="ENSRNOG00000014971.6"/>
</dbReference>
<dbReference type="Ensembl" id="ENSRNOT00000104217.1">
    <property type="protein sequence ID" value="ENSRNOP00000097396.1"/>
    <property type="gene ID" value="ENSRNOG00000014971.6"/>
</dbReference>
<dbReference type="GeneID" id="25153"/>
<dbReference type="KEGG" id="rno:25153"/>
<dbReference type="AGR" id="RGD:3049"/>
<dbReference type="CTD" id="4142"/>
<dbReference type="RGD" id="3049">
    <property type="gene designation" value="Mas1"/>
</dbReference>
<dbReference type="eggNOG" id="KOG3656">
    <property type="taxonomic scope" value="Eukaryota"/>
</dbReference>
<dbReference type="GeneTree" id="ENSGT01030000234639"/>
<dbReference type="HOGENOM" id="CLU_009579_4_1_1"/>
<dbReference type="InParanoid" id="P12526"/>
<dbReference type="OMA" id="DGNHCQA"/>
<dbReference type="OrthoDB" id="6091802at2759"/>
<dbReference type="PhylomeDB" id="P12526"/>
<dbReference type="TreeFam" id="TF336336"/>
<dbReference type="PRO" id="PR:P12526"/>
<dbReference type="Proteomes" id="UP000002494">
    <property type="component" value="Chromosome 1"/>
</dbReference>
<dbReference type="Bgee" id="ENSRNOG00000014971">
    <property type="expression patterns" value="Expressed in Ammon's horn and 9 other cell types or tissues"/>
</dbReference>
<dbReference type="ExpressionAtlas" id="P12526">
    <property type="expression patterns" value="baseline and differential"/>
</dbReference>
<dbReference type="GO" id="GO:0009986">
    <property type="term" value="C:cell surface"/>
    <property type="evidence" value="ECO:0000314"/>
    <property type="project" value="RGD"/>
</dbReference>
<dbReference type="GO" id="GO:0005886">
    <property type="term" value="C:plasma membrane"/>
    <property type="evidence" value="ECO:0000266"/>
    <property type="project" value="RGD"/>
</dbReference>
<dbReference type="GO" id="GO:0001595">
    <property type="term" value="F:angiotensin receptor activity"/>
    <property type="evidence" value="ECO:0000266"/>
    <property type="project" value="RGD"/>
</dbReference>
<dbReference type="GO" id="GO:0008528">
    <property type="term" value="F:G protein-coupled peptide receptor activity"/>
    <property type="evidence" value="ECO:0000266"/>
    <property type="project" value="RGD"/>
</dbReference>
<dbReference type="GO" id="GO:0004930">
    <property type="term" value="F:G protein-coupled receptor activity"/>
    <property type="evidence" value="ECO:0000266"/>
    <property type="project" value="RGD"/>
</dbReference>
<dbReference type="GO" id="GO:0042277">
    <property type="term" value="F:peptide binding"/>
    <property type="evidence" value="ECO:0000266"/>
    <property type="project" value="RGD"/>
</dbReference>
<dbReference type="GO" id="GO:0007189">
    <property type="term" value="P:adenylate cyclase-activating G protein-coupled receptor signaling pathway"/>
    <property type="evidence" value="ECO:0000266"/>
    <property type="project" value="RGD"/>
</dbReference>
<dbReference type="GO" id="GO:0002033">
    <property type="term" value="P:angiotensin-mediated vasodilation involved in regulation of systemic arterial blood pressure"/>
    <property type="evidence" value="ECO:0000266"/>
    <property type="project" value="RGD"/>
</dbReference>
<dbReference type="GO" id="GO:0071375">
    <property type="term" value="P:cellular response to peptide hormone stimulus"/>
    <property type="evidence" value="ECO:0000270"/>
    <property type="project" value="RGD"/>
</dbReference>
<dbReference type="GO" id="GO:0007186">
    <property type="term" value="P:G protein-coupled receptor signaling pathway"/>
    <property type="evidence" value="ECO:0000266"/>
    <property type="project" value="RGD"/>
</dbReference>
<dbReference type="GO" id="GO:0021766">
    <property type="term" value="P:hippocampus development"/>
    <property type="evidence" value="ECO:0000270"/>
    <property type="project" value="RGD"/>
</dbReference>
<dbReference type="GO" id="GO:0008584">
    <property type="term" value="P:male gonad development"/>
    <property type="evidence" value="ECO:0000270"/>
    <property type="project" value="RGD"/>
</dbReference>
<dbReference type="GO" id="GO:0086097">
    <property type="term" value="P:phospholipase C-activating angiotensin-activated signaling pathway"/>
    <property type="evidence" value="ECO:0000266"/>
    <property type="project" value="RGD"/>
</dbReference>
<dbReference type="GO" id="GO:0043123">
    <property type="term" value="P:positive regulation of canonical NF-kappaB signal transduction"/>
    <property type="evidence" value="ECO:0000266"/>
    <property type="project" value="RGD"/>
</dbReference>
<dbReference type="GO" id="GO:0008284">
    <property type="term" value="P:positive regulation of cell population proliferation"/>
    <property type="evidence" value="ECO:0000314"/>
    <property type="project" value="RGD"/>
</dbReference>
<dbReference type="GO" id="GO:0045740">
    <property type="term" value="P:positive regulation of DNA replication"/>
    <property type="evidence" value="ECO:0000314"/>
    <property type="project" value="RGD"/>
</dbReference>
<dbReference type="GO" id="GO:0060732">
    <property type="term" value="P:positive regulation of inositol phosphate biosynthetic process"/>
    <property type="evidence" value="ECO:0000314"/>
    <property type="project" value="RGD"/>
</dbReference>
<dbReference type="GO" id="GO:0050727">
    <property type="term" value="P:regulation of inflammatory response"/>
    <property type="evidence" value="ECO:0000266"/>
    <property type="project" value="RGD"/>
</dbReference>
<dbReference type="GO" id="GO:0014823">
    <property type="term" value="P:response to activity"/>
    <property type="evidence" value="ECO:0000270"/>
    <property type="project" value="RGD"/>
</dbReference>
<dbReference type="GO" id="GO:0034698">
    <property type="term" value="P:response to gonadotropin"/>
    <property type="evidence" value="ECO:0000270"/>
    <property type="project" value="RGD"/>
</dbReference>
<dbReference type="GO" id="GO:0043434">
    <property type="term" value="P:response to peptide hormone"/>
    <property type="evidence" value="ECO:0000270"/>
    <property type="project" value="RGD"/>
</dbReference>
<dbReference type="GO" id="GO:0009410">
    <property type="term" value="P:response to xenobiotic stimulus"/>
    <property type="evidence" value="ECO:0000270"/>
    <property type="project" value="RGD"/>
</dbReference>
<dbReference type="GO" id="GO:0007283">
    <property type="term" value="P:spermatogenesis"/>
    <property type="evidence" value="ECO:0000315"/>
    <property type="project" value="RGD"/>
</dbReference>
<dbReference type="CDD" id="cd15110">
    <property type="entry name" value="7tmA_MrgprH"/>
    <property type="match status" value="1"/>
</dbReference>
<dbReference type="FunFam" id="1.20.1070.10:FF:000134">
    <property type="entry name" value="proto-oncogene Mas"/>
    <property type="match status" value="1"/>
</dbReference>
<dbReference type="Gene3D" id="1.20.1070.10">
    <property type="entry name" value="Rhodopsin 7-helix transmembrane proteins"/>
    <property type="match status" value="1"/>
</dbReference>
<dbReference type="InterPro" id="IPR000276">
    <property type="entry name" value="GPCR_Rhodpsn"/>
</dbReference>
<dbReference type="InterPro" id="IPR017452">
    <property type="entry name" value="GPCR_Rhodpsn_7TM"/>
</dbReference>
<dbReference type="InterPro" id="IPR026234">
    <property type="entry name" value="MRGPCRFAMILY"/>
</dbReference>
<dbReference type="InterPro" id="IPR000820">
    <property type="entry name" value="Proto-oncogene_Mas"/>
</dbReference>
<dbReference type="PANTHER" id="PTHR11334">
    <property type="entry name" value="MAS-RELATED G-PROTEIN COUPLED RECEPTOR"/>
    <property type="match status" value="1"/>
</dbReference>
<dbReference type="PANTHER" id="PTHR11334:SF61">
    <property type="entry name" value="PROTO-ONCOGENE MAS"/>
    <property type="match status" value="1"/>
</dbReference>
<dbReference type="Pfam" id="PF00001">
    <property type="entry name" value="7tm_1"/>
    <property type="match status" value="1"/>
</dbReference>
<dbReference type="PRINTS" id="PR00237">
    <property type="entry name" value="GPCRRHODOPSN"/>
</dbReference>
<dbReference type="PRINTS" id="PR00533">
    <property type="entry name" value="MASONCOGENE"/>
</dbReference>
<dbReference type="SUPFAM" id="SSF81321">
    <property type="entry name" value="Family A G protein-coupled receptor-like"/>
    <property type="match status" value="1"/>
</dbReference>
<dbReference type="PROSITE" id="PS00237">
    <property type="entry name" value="G_PROTEIN_RECEP_F1_1"/>
    <property type="match status" value="1"/>
</dbReference>
<dbReference type="PROSITE" id="PS50262">
    <property type="entry name" value="G_PROTEIN_RECEP_F1_2"/>
    <property type="match status" value="1"/>
</dbReference>
<name>MAS_RAT</name>
<organism>
    <name type="scientific">Rattus norvegicus</name>
    <name type="common">Rat</name>
    <dbReference type="NCBI Taxonomy" id="10116"/>
    <lineage>
        <taxon>Eukaryota</taxon>
        <taxon>Metazoa</taxon>
        <taxon>Chordata</taxon>
        <taxon>Craniata</taxon>
        <taxon>Vertebrata</taxon>
        <taxon>Euteleostomi</taxon>
        <taxon>Mammalia</taxon>
        <taxon>Eutheria</taxon>
        <taxon>Euarchontoglires</taxon>
        <taxon>Glires</taxon>
        <taxon>Rodentia</taxon>
        <taxon>Myomorpha</taxon>
        <taxon>Muroidea</taxon>
        <taxon>Muridae</taxon>
        <taxon>Murinae</taxon>
        <taxon>Rattus</taxon>
    </lineage>
</organism>
<proteinExistence type="evidence at transcript level"/>
<comment type="function">
    <text evidence="1">Receptor for angiotensin 1-7 (By similarity). Acts specifically as a functional antagonist of AGTR1 (angiotensin-2 type 1 receptor), although it up-regulates AGTR1 receptor levels. Positive regulation of AGTR1 levels occurs through activation of the G-proteins GNA11 and GNAQ, and stimulation of the protein kinase C signaling cascade. The antagonist effect on AGTR1 function is probably due to AGTR1 being physically altered by MAS1 (By similarity).</text>
</comment>
<comment type="subunit">
    <text evidence="2">Interacts with AGTR1. Interacts with FLNA (via filamin repeat 21); increases PKA-mediated phosphorylation of FLNA.</text>
</comment>
<comment type="subcellular location">
    <subcellularLocation>
        <location>Cell membrane</location>
        <topology>Multi-pass membrane protein</topology>
    </subcellularLocation>
</comment>
<comment type="tissue specificity">
    <text evidence="5">Expressed in platelets.</text>
</comment>
<comment type="similarity">
    <text evidence="4">Belongs to the G-protein coupled receptor 1 family.</text>
</comment>
<feature type="chain" id="PRO_0000069716" description="Proto-oncogene Mas">
    <location>
        <begin position="1"/>
        <end position="324"/>
    </location>
</feature>
<feature type="topological domain" description="Extracellular" evidence="3">
    <location>
        <begin position="1"/>
        <end position="35"/>
    </location>
</feature>
<feature type="transmembrane region" description="Helical; Name=1" evidence="3">
    <location>
        <begin position="36"/>
        <end position="60"/>
    </location>
</feature>
<feature type="topological domain" description="Cytoplasmic" evidence="3">
    <location>
        <begin position="61"/>
        <end position="64"/>
    </location>
</feature>
<feature type="transmembrane region" description="Helical; Name=2" evidence="3">
    <location>
        <begin position="65"/>
        <end position="86"/>
    </location>
</feature>
<feature type="topological domain" description="Extracellular" evidence="3">
    <location>
        <begin position="87"/>
        <end position="103"/>
    </location>
</feature>
<feature type="transmembrane region" description="Helical; Name=3" evidence="3">
    <location>
        <begin position="104"/>
        <end position="127"/>
    </location>
</feature>
<feature type="topological domain" description="Cytoplasmic" evidence="3">
    <location>
        <begin position="128"/>
        <end position="148"/>
    </location>
</feature>
<feature type="transmembrane region" description="Helical; Name=4" evidence="3">
    <location>
        <begin position="149"/>
        <end position="171"/>
    </location>
</feature>
<feature type="topological domain" description="Extracellular" evidence="3">
    <location>
        <begin position="172"/>
        <end position="184"/>
    </location>
</feature>
<feature type="transmembrane region" description="Helical; Name=5" evidence="3">
    <location>
        <begin position="185"/>
        <end position="205"/>
    </location>
</feature>
<feature type="topological domain" description="Cytoplasmic" evidence="3">
    <location>
        <begin position="206"/>
        <end position="223"/>
    </location>
</feature>
<feature type="transmembrane region" description="Helical; Name=6" evidence="3">
    <location>
        <begin position="224"/>
        <end position="244"/>
    </location>
</feature>
<feature type="topological domain" description="Extracellular" evidence="3">
    <location>
        <begin position="245"/>
        <end position="262"/>
    </location>
</feature>
<feature type="transmembrane region" description="Helical; Name=7" evidence="3">
    <location>
        <begin position="263"/>
        <end position="283"/>
    </location>
</feature>
<feature type="topological domain" description="Cytoplasmic" evidence="3">
    <location>
        <begin position="284"/>
        <end position="324"/>
    </location>
</feature>
<feature type="glycosylation site" description="N-linked (GlcNAc...) asparagine" evidence="3">
    <location>
        <position position="5"/>
    </location>
</feature>
<feature type="glycosylation site" description="N-linked (GlcNAc...) asparagine" evidence="3">
    <location>
        <position position="16"/>
    </location>
</feature>
<feature type="glycosylation site" description="N-linked (GlcNAc...) asparagine" evidence="3">
    <location>
        <position position="21"/>
    </location>
</feature>
<reference key="1">
    <citation type="journal article" date="1988" name="Proc. Natl. Acad. Sci. U.S.A.">
        <title>Characterization of the rat mas oncogene and its high-level expression in the hippocampus and cerebral cortex of rat brain.</title>
        <authorList>
            <person name="Young D."/>
            <person name="O'Neill K."/>
            <person name="Jessell T."/>
            <person name="Wigler M."/>
        </authorList>
    </citation>
    <scope>NUCLEOTIDE SEQUENCE [GENOMIC DNA]</scope>
</reference>
<reference key="2">
    <citation type="journal article" date="2004" name="Genome Res.">
        <title>The status, quality, and expansion of the NIH full-length cDNA project: the Mammalian Gene Collection (MGC).</title>
        <authorList>
            <consortium name="The MGC Project Team"/>
        </authorList>
    </citation>
    <scope>NUCLEOTIDE SEQUENCE [LARGE SCALE MRNA]</scope>
    <source>
        <tissue>Testis</tissue>
    </source>
</reference>
<reference key="3">
    <citation type="journal article" date="2008" name="Mol. Med.">
        <title>The antithrombotic effect of angiotensin-(1-7) involves mas-mediated NO release from platelets.</title>
        <authorList>
            <person name="Fraga-Silva R.A."/>
            <person name="Pinheiro S.V.B."/>
            <person name="Goncalves A.C."/>
            <person name="Alenina N."/>
            <person name="Bader M."/>
            <person name="Santos R.A.S."/>
        </authorList>
    </citation>
    <scope>TISSUE SPECIFICITY</scope>
</reference>
<protein>
    <recommendedName>
        <fullName>Proto-oncogene Mas</fullName>
    </recommendedName>
</protein>
<accession>P12526</accession>
<gene>
    <name type="primary">Mas1</name>
    <name type="synonym">Mas</name>
    <name type="synonym">Mas-1</name>
</gene>
<sequence>MDQSNMTSFAEEKAMNTSSRNASLGTSHPPIPIVHWVIMSISPLGFVENGILLWFLCFRMRRNPFTVYITHLSIADISLLFCIFILSIDYALDYELSSGHYYTIVTLSVTFLFGYNTGLYLLTAISVERCLSVLYPIWYRCHRPKHQSAFVCALLWALSCLVTTMEYVMCIDSGEESHSQSDCRAVIIFIAILSFLVFTPLMLVSSTILVVKIRKNTWASHSSKLYIVIMVTIIIFLIFAMPMRVLYLLYYEYWSTFGNLHNISLLFSTINSSANPFIYFFVGSSKKKRFRESLKVVLTRAFKDEMQPRRQEGNGNTVSIETVV</sequence>
<evidence type="ECO:0000250" key="1"/>
<evidence type="ECO:0000250" key="2">
    <source>
        <dbReference type="UniProtKB" id="P04201"/>
    </source>
</evidence>
<evidence type="ECO:0000255" key="3"/>
<evidence type="ECO:0000255" key="4">
    <source>
        <dbReference type="PROSITE-ProRule" id="PRU00521"/>
    </source>
</evidence>
<evidence type="ECO:0000269" key="5">
    <source>
    </source>
</evidence>
<keyword id="KW-1003">Cell membrane</keyword>
<keyword id="KW-0297">G-protein coupled receptor</keyword>
<keyword id="KW-0325">Glycoprotein</keyword>
<keyword id="KW-0472">Membrane</keyword>
<keyword id="KW-0656">Proto-oncogene</keyword>
<keyword id="KW-0675">Receptor</keyword>
<keyword id="KW-1185">Reference proteome</keyword>
<keyword id="KW-0807">Transducer</keyword>
<keyword id="KW-0812">Transmembrane</keyword>
<keyword id="KW-1133">Transmembrane helix</keyword>